<name>NA121_ACTEQ</name>
<feature type="signal peptide" evidence="3">
    <location>
        <begin position="1"/>
        <end position="19"/>
    </location>
</feature>
<feature type="propeptide" id="PRO_0000433575" evidence="2">
    <location>
        <begin position="20"/>
        <end position="26"/>
    </location>
</feature>
<feature type="chain" id="PRO_5000319686" description="Delta-actitoxin-Aeq2b 1">
    <location>
        <begin position="29"/>
        <end position="82"/>
    </location>
</feature>
<feature type="disulfide bond" evidence="1">
    <location>
        <begin position="32"/>
        <end position="79"/>
    </location>
</feature>
<feature type="disulfide bond" evidence="1">
    <location>
        <begin position="34"/>
        <end position="69"/>
    </location>
</feature>
<feature type="disulfide bond" evidence="1">
    <location>
        <begin position="62"/>
        <end position="80"/>
    </location>
</feature>
<evidence type="ECO:0000250" key="1">
    <source>
        <dbReference type="UniProtKB" id="P01530"/>
    </source>
</evidence>
<evidence type="ECO:0000250" key="2">
    <source>
        <dbReference type="UniProtKB" id="Q9NJQ2"/>
    </source>
</evidence>
<evidence type="ECO:0000255" key="3"/>
<evidence type="ECO:0000303" key="4">
    <source>
    </source>
</evidence>
<evidence type="ECO:0000303" key="5">
    <source>
    </source>
</evidence>
<evidence type="ECO:0000305" key="6"/>
<evidence type="ECO:0000312" key="7">
    <source>
        <dbReference type="EMBL" id="ABW97358.1"/>
    </source>
</evidence>
<organism>
    <name type="scientific">Actinia equina</name>
    <name type="common">Beadlet anemone</name>
    <dbReference type="NCBI Taxonomy" id="6106"/>
    <lineage>
        <taxon>Eukaryota</taxon>
        <taxon>Metazoa</taxon>
        <taxon>Cnidaria</taxon>
        <taxon>Anthozoa</taxon>
        <taxon>Hexacorallia</taxon>
        <taxon>Actiniaria</taxon>
        <taxon>Actiniidae</taxon>
        <taxon>Actinia</taxon>
    </lineage>
</organism>
<accession>B1NWU2</accession>
<sequence length="82" mass="8825">MNRLMILVFAAVILALASADEDVDIAKRGVPCLCVSDGPRPRGNNLSGIMWMKTGGYGGNGCPKGWHFCGKSRGFFSDCCKR</sequence>
<proteinExistence type="inferred from homology"/>
<dbReference type="EMBL" id="EU124479">
    <property type="protein sequence ID" value="ABW97358.1"/>
    <property type="molecule type" value="Genomic_DNA"/>
</dbReference>
<dbReference type="SMR" id="B1NWU2"/>
<dbReference type="GO" id="GO:0005576">
    <property type="term" value="C:extracellular region"/>
    <property type="evidence" value="ECO:0007669"/>
    <property type="project" value="UniProtKB-SubCell"/>
</dbReference>
<dbReference type="GO" id="GO:0042151">
    <property type="term" value="C:nematocyst"/>
    <property type="evidence" value="ECO:0007669"/>
    <property type="project" value="UniProtKB-SubCell"/>
</dbReference>
<dbReference type="GO" id="GO:0017080">
    <property type="term" value="F:sodium channel regulator activity"/>
    <property type="evidence" value="ECO:0007669"/>
    <property type="project" value="UniProtKB-KW"/>
</dbReference>
<dbReference type="GO" id="GO:0090729">
    <property type="term" value="F:toxin activity"/>
    <property type="evidence" value="ECO:0007669"/>
    <property type="project" value="UniProtKB-KW"/>
</dbReference>
<dbReference type="Gene3D" id="2.20.20.10">
    <property type="entry name" value="Anthopleurin-A"/>
    <property type="match status" value="1"/>
</dbReference>
<dbReference type="InterPro" id="IPR023355">
    <property type="entry name" value="Myo_ane_neurotoxin_sf"/>
</dbReference>
<dbReference type="Pfam" id="PF00706">
    <property type="entry name" value="Toxin_4"/>
    <property type="match status" value="1"/>
</dbReference>
<dbReference type="SUPFAM" id="SSF57392">
    <property type="entry name" value="Defensin-like"/>
    <property type="match status" value="1"/>
</dbReference>
<keyword id="KW-0165">Cleavage on pair of basic residues</keyword>
<keyword id="KW-1015">Disulfide bond</keyword>
<keyword id="KW-0872">Ion channel impairing toxin</keyword>
<keyword id="KW-0166">Nematocyst</keyword>
<keyword id="KW-0528">Neurotoxin</keyword>
<keyword id="KW-0964">Secreted</keyword>
<keyword id="KW-0732">Signal</keyword>
<keyword id="KW-0800">Toxin</keyword>
<keyword id="KW-0738">Voltage-gated sodium channel impairing toxin</keyword>
<reference key="1">
    <citation type="journal article" date="2008" name="Mol. Biol. Evol.">
        <title>Concerted evolution of sea anemone neurotoxin genes is revealed through analysis of the Nematostella vectensis genome.</title>
        <authorList>
            <person name="Moran Y."/>
            <person name="Weinberger H."/>
            <person name="Sullivan J.C."/>
            <person name="Reitzel A.M."/>
            <person name="Finnerty J.R."/>
            <person name="Gurevitz M."/>
        </authorList>
    </citation>
    <scope>NUCLEOTIDE SEQUENCE [GENOMIC DNA]</scope>
</reference>
<reference key="2">
    <citation type="journal article" date="2012" name="Toxicon">
        <title>Development of a rational nomenclature for naming peptide and protein toxins from sea anemones.</title>
        <authorList>
            <person name="Oliveira J.S."/>
            <person name="Fuentes-Silva D."/>
            <person name="King G.F."/>
        </authorList>
    </citation>
    <scope>NOMENCLATURE</scope>
</reference>
<protein>
    <recommendedName>
        <fullName evidence="5">Delta-actitoxin-Aeq2b 1</fullName>
        <shortName evidence="5">Delta-AITX-Aeq2b 1</shortName>
    </recommendedName>
    <alternativeName>
        <fullName evidence="4">Ae2-1</fullName>
    </alternativeName>
    <alternativeName>
        <fullName evidence="7">Neurotoxin 2-1</fullName>
    </alternativeName>
</protein>
<comment type="function">
    <text evidence="2">Binds specifically to voltage-gated sodium channels (Nav), thereby delaying their inactivation during signal transduction. Causes death to crabs.</text>
</comment>
<comment type="subcellular location">
    <subcellularLocation>
        <location evidence="6">Secreted</location>
    </subcellularLocation>
    <subcellularLocation>
        <location evidence="6">Nematocyst</location>
    </subcellularLocation>
</comment>
<comment type="similarity">
    <text evidence="6">Belongs to the sea anemone sodium channel inhibitory toxin family. Type I subfamily.</text>
</comment>